<reference key="1">
    <citation type="journal article" date="2004" name="Nat. Genet.">
        <title>Complete sequencing and characterization of 21,243 full-length human cDNAs.</title>
        <authorList>
            <person name="Ota T."/>
            <person name="Suzuki Y."/>
            <person name="Nishikawa T."/>
            <person name="Otsuki T."/>
            <person name="Sugiyama T."/>
            <person name="Irie R."/>
            <person name="Wakamatsu A."/>
            <person name="Hayashi K."/>
            <person name="Sato H."/>
            <person name="Nagai K."/>
            <person name="Kimura K."/>
            <person name="Makita H."/>
            <person name="Sekine M."/>
            <person name="Obayashi M."/>
            <person name="Nishi T."/>
            <person name="Shibahara T."/>
            <person name="Tanaka T."/>
            <person name="Ishii S."/>
            <person name="Yamamoto J."/>
            <person name="Saito K."/>
            <person name="Kawai Y."/>
            <person name="Isono Y."/>
            <person name="Nakamura Y."/>
            <person name="Nagahari K."/>
            <person name="Murakami K."/>
            <person name="Yasuda T."/>
            <person name="Iwayanagi T."/>
            <person name="Wagatsuma M."/>
            <person name="Shiratori A."/>
            <person name="Sudo H."/>
            <person name="Hosoiri T."/>
            <person name="Kaku Y."/>
            <person name="Kodaira H."/>
            <person name="Kondo H."/>
            <person name="Sugawara M."/>
            <person name="Takahashi M."/>
            <person name="Kanda K."/>
            <person name="Yokoi T."/>
            <person name="Furuya T."/>
            <person name="Kikkawa E."/>
            <person name="Omura Y."/>
            <person name="Abe K."/>
            <person name="Kamihara K."/>
            <person name="Katsuta N."/>
            <person name="Sato K."/>
            <person name="Tanikawa M."/>
            <person name="Yamazaki M."/>
            <person name="Ninomiya K."/>
            <person name="Ishibashi T."/>
            <person name="Yamashita H."/>
            <person name="Murakawa K."/>
            <person name="Fujimori K."/>
            <person name="Tanai H."/>
            <person name="Kimata M."/>
            <person name="Watanabe M."/>
            <person name="Hiraoka S."/>
            <person name="Chiba Y."/>
            <person name="Ishida S."/>
            <person name="Ono Y."/>
            <person name="Takiguchi S."/>
            <person name="Watanabe S."/>
            <person name="Yosida M."/>
            <person name="Hotuta T."/>
            <person name="Kusano J."/>
            <person name="Kanehori K."/>
            <person name="Takahashi-Fujii A."/>
            <person name="Hara H."/>
            <person name="Tanase T.-O."/>
            <person name="Nomura Y."/>
            <person name="Togiya S."/>
            <person name="Komai F."/>
            <person name="Hara R."/>
            <person name="Takeuchi K."/>
            <person name="Arita M."/>
            <person name="Imose N."/>
            <person name="Musashino K."/>
            <person name="Yuuki H."/>
            <person name="Oshima A."/>
            <person name="Sasaki N."/>
            <person name="Aotsuka S."/>
            <person name="Yoshikawa Y."/>
            <person name="Matsunawa H."/>
            <person name="Ichihara T."/>
            <person name="Shiohata N."/>
            <person name="Sano S."/>
            <person name="Moriya S."/>
            <person name="Momiyama H."/>
            <person name="Satoh N."/>
            <person name="Takami S."/>
            <person name="Terashima Y."/>
            <person name="Suzuki O."/>
            <person name="Nakagawa S."/>
            <person name="Senoh A."/>
            <person name="Mizoguchi H."/>
            <person name="Goto Y."/>
            <person name="Shimizu F."/>
            <person name="Wakebe H."/>
            <person name="Hishigaki H."/>
            <person name="Watanabe T."/>
            <person name="Sugiyama A."/>
            <person name="Takemoto M."/>
            <person name="Kawakami B."/>
            <person name="Yamazaki M."/>
            <person name="Watanabe K."/>
            <person name="Kumagai A."/>
            <person name="Itakura S."/>
            <person name="Fukuzumi Y."/>
            <person name="Fujimori Y."/>
            <person name="Komiyama M."/>
            <person name="Tashiro H."/>
            <person name="Tanigami A."/>
            <person name="Fujiwara T."/>
            <person name="Ono T."/>
            <person name="Yamada K."/>
            <person name="Fujii Y."/>
            <person name="Ozaki K."/>
            <person name="Hirao M."/>
            <person name="Ohmori Y."/>
            <person name="Kawabata A."/>
            <person name="Hikiji T."/>
            <person name="Kobatake N."/>
            <person name="Inagaki H."/>
            <person name="Ikema Y."/>
            <person name="Okamoto S."/>
            <person name="Okitani R."/>
            <person name="Kawakami T."/>
            <person name="Noguchi S."/>
            <person name="Itoh T."/>
            <person name="Shigeta K."/>
            <person name="Senba T."/>
            <person name="Matsumura K."/>
            <person name="Nakajima Y."/>
            <person name="Mizuno T."/>
            <person name="Morinaga M."/>
            <person name="Sasaki M."/>
            <person name="Togashi T."/>
            <person name="Oyama M."/>
            <person name="Hata H."/>
            <person name="Watanabe M."/>
            <person name="Komatsu T."/>
            <person name="Mizushima-Sugano J."/>
            <person name="Satoh T."/>
            <person name="Shirai Y."/>
            <person name="Takahashi Y."/>
            <person name="Nakagawa K."/>
            <person name="Okumura K."/>
            <person name="Nagase T."/>
            <person name="Nomura N."/>
            <person name="Kikuchi H."/>
            <person name="Masuho Y."/>
            <person name="Yamashita R."/>
            <person name="Nakai K."/>
            <person name="Yada T."/>
            <person name="Nakamura Y."/>
            <person name="Ohara O."/>
            <person name="Isogai T."/>
            <person name="Sugano S."/>
        </authorList>
    </citation>
    <scope>NUCLEOTIDE SEQUENCE [LARGE SCALE MRNA] (ISOFORM 3)</scope>
    <scope>NUCLEOTIDE SEQUENCE [LARGE SCALE MRNA] OF 8-896 (ISOFORM 2)</scope>
    <source>
        <tissue>Testis</tissue>
        <tissue>Uterus</tissue>
    </source>
</reference>
<reference key="2">
    <citation type="journal article" date="2004" name="Genome Res.">
        <title>The status, quality, and expansion of the NIH full-length cDNA project: the Mammalian Gene Collection (MGC).</title>
        <authorList>
            <consortium name="The MGC Project Team"/>
        </authorList>
    </citation>
    <scope>NUCLEOTIDE SEQUENCE [LARGE SCALE MRNA] (ISOFORM 1)</scope>
    <source>
        <tissue>Uterus</tissue>
    </source>
</reference>
<reference key="3">
    <citation type="journal article" date="2006" name="Nat. Biotechnol.">
        <title>A probability-based approach for high-throughput protein phosphorylation analysis and site localization.</title>
        <authorList>
            <person name="Beausoleil S.A."/>
            <person name="Villen J."/>
            <person name="Gerber S.A."/>
            <person name="Rush J."/>
            <person name="Gygi S.P."/>
        </authorList>
    </citation>
    <scope>PHOSPHORYLATION [LARGE SCALE ANALYSIS] AT SER-176 AND THR-881</scope>
    <scope>IDENTIFICATION BY MASS SPECTROMETRY [LARGE SCALE ANALYSIS]</scope>
    <source>
        <tissue>Cervix carcinoma</tissue>
    </source>
</reference>
<reference key="4">
    <citation type="journal article" date="2008" name="J. Cell Sci.">
        <title>EML3 is a nuclear microtubule-binding protein required for the correct alignment of chromosomes in metaphase.</title>
        <authorList>
            <person name="Tegha-Dunghu J."/>
            <person name="Neumann B."/>
            <person name="Reber S."/>
            <person name="Krause R."/>
            <person name="Erfle H."/>
            <person name="Walter T."/>
            <person name="Held M."/>
            <person name="Rogers P."/>
            <person name="Hupfeld K."/>
            <person name="Ruppert T."/>
            <person name="Ellenberg J."/>
            <person name="Gruss O.J."/>
        </authorList>
    </citation>
    <scope>FUNCTION</scope>
    <scope>SUBCELLULAR LOCATION</scope>
    <scope>MICROTUBULE-BINDING</scope>
</reference>
<reference key="5">
    <citation type="journal article" date="2008" name="J. Proteome Res.">
        <title>Combining protein-based IMAC, peptide-based IMAC, and MudPIT for efficient phosphoproteomic analysis.</title>
        <authorList>
            <person name="Cantin G.T."/>
            <person name="Yi W."/>
            <person name="Lu B."/>
            <person name="Park S.K."/>
            <person name="Xu T."/>
            <person name="Lee J.-D."/>
            <person name="Yates J.R. III"/>
        </authorList>
    </citation>
    <scope>IDENTIFICATION BY MASS SPECTROMETRY [LARGE SCALE ANALYSIS]</scope>
    <source>
        <tissue>Cervix carcinoma</tissue>
    </source>
</reference>
<reference key="6">
    <citation type="journal article" date="2008" name="Proc. Natl. Acad. Sci. U.S.A.">
        <title>A quantitative atlas of mitotic phosphorylation.</title>
        <authorList>
            <person name="Dephoure N."/>
            <person name="Zhou C."/>
            <person name="Villen J."/>
            <person name="Beausoleil S.A."/>
            <person name="Bakalarski C.E."/>
            <person name="Elledge S.J."/>
            <person name="Gygi S.P."/>
        </authorList>
    </citation>
    <scope>PHOSPHORYLATION [LARGE SCALE ANALYSIS] AT SER-176</scope>
    <scope>IDENTIFICATION BY MASS SPECTROMETRY [LARGE SCALE ANALYSIS]</scope>
    <source>
        <tissue>Cervix carcinoma</tissue>
    </source>
</reference>
<reference key="7">
    <citation type="journal article" date="2009" name="Sci. Signal.">
        <title>Quantitative phosphoproteomic analysis of T cell receptor signaling reveals system-wide modulation of protein-protein interactions.</title>
        <authorList>
            <person name="Mayya V."/>
            <person name="Lundgren D.H."/>
            <person name="Hwang S.-I."/>
            <person name="Rezaul K."/>
            <person name="Wu L."/>
            <person name="Eng J.K."/>
            <person name="Rodionov V."/>
            <person name="Han D.K."/>
        </authorList>
    </citation>
    <scope>PHOSPHORYLATION [LARGE SCALE ANALYSIS] AT SER-176</scope>
    <scope>IDENTIFICATION BY MASS SPECTROMETRY [LARGE SCALE ANALYSIS]</scope>
    <source>
        <tissue>Leukemic T-cell</tissue>
    </source>
</reference>
<reference key="8">
    <citation type="journal article" date="2010" name="Sci. Signal.">
        <title>Quantitative phosphoproteomics reveals widespread full phosphorylation site occupancy during mitosis.</title>
        <authorList>
            <person name="Olsen J.V."/>
            <person name="Vermeulen M."/>
            <person name="Santamaria A."/>
            <person name="Kumar C."/>
            <person name="Miller M.L."/>
            <person name="Jensen L.J."/>
            <person name="Gnad F."/>
            <person name="Cox J."/>
            <person name="Jensen T.S."/>
            <person name="Nigg E.A."/>
            <person name="Brunak S."/>
            <person name="Mann M."/>
        </authorList>
    </citation>
    <scope>PHOSPHORYLATION [LARGE SCALE ANALYSIS] AT SER-176</scope>
    <scope>IDENTIFICATION BY MASS SPECTROMETRY [LARGE SCALE ANALYSIS]</scope>
    <source>
        <tissue>Cervix carcinoma</tissue>
    </source>
</reference>
<reference key="9">
    <citation type="journal article" date="2011" name="BMC Syst. Biol.">
        <title>Initial characterization of the human central proteome.</title>
        <authorList>
            <person name="Burkard T.R."/>
            <person name="Planyavsky M."/>
            <person name="Kaupe I."/>
            <person name="Breitwieser F.P."/>
            <person name="Buerckstuemmer T."/>
            <person name="Bennett K.L."/>
            <person name="Superti-Furga G."/>
            <person name="Colinge J."/>
        </authorList>
    </citation>
    <scope>IDENTIFICATION BY MASS SPECTROMETRY [LARGE SCALE ANALYSIS]</scope>
</reference>
<reference key="10">
    <citation type="journal article" date="2011" name="Sci. Signal.">
        <title>System-wide temporal characterization of the proteome and phosphoproteome of human embryonic stem cell differentiation.</title>
        <authorList>
            <person name="Rigbolt K.T."/>
            <person name="Prokhorova T.A."/>
            <person name="Akimov V."/>
            <person name="Henningsen J."/>
            <person name="Johansen P.T."/>
            <person name="Kratchmarova I."/>
            <person name="Kassem M."/>
            <person name="Mann M."/>
            <person name="Olsen J.V."/>
            <person name="Blagoev B."/>
        </authorList>
    </citation>
    <scope>PHOSPHORYLATION [LARGE SCALE ANALYSIS] AT SER-176</scope>
    <scope>IDENTIFICATION BY MASS SPECTROMETRY [LARGE SCALE ANALYSIS]</scope>
</reference>
<reference key="11">
    <citation type="journal article" date="2012" name="Proc. Natl. Acad. Sci. U.S.A.">
        <title>N-terminal acetylome analyses and functional insights of the N-terminal acetyltransferase NatB.</title>
        <authorList>
            <person name="Van Damme P."/>
            <person name="Lasa M."/>
            <person name="Polevoda B."/>
            <person name="Gazquez C."/>
            <person name="Elosegui-Artola A."/>
            <person name="Kim D.S."/>
            <person name="De Juan-Pardo E."/>
            <person name="Demeyer K."/>
            <person name="Hole K."/>
            <person name="Larrea E."/>
            <person name="Timmerman E."/>
            <person name="Prieto J."/>
            <person name="Arnesen T."/>
            <person name="Sherman F."/>
            <person name="Gevaert K."/>
            <person name="Aldabe R."/>
        </authorList>
    </citation>
    <scope>ACETYLATION [LARGE SCALE ANALYSIS] AT MET-1</scope>
    <scope>IDENTIFICATION BY MASS SPECTROMETRY [LARGE SCALE ANALYSIS]</scope>
</reference>
<reference key="12">
    <citation type="journal article" date="2013" name="J. Proteome Res.">
        <title>Toward a comprehensive characterization of a human cancer cell phosphoproteome.</title>
        <authorList>
            <person name="Zhou H."/>
            <person name="Di Palma S."/>
            <person name="Preisinger C."/>
            <person name="Peng M."/>
            <person name="Polat A.N."/>
            <person name="Heck A.J."/>
            <person name="Mohammed S."/>
        </authorList>
    </citation>
    <scope>PHOSPHORYLATION [LARGE SCALE ANALYSIS] AT SER-176; SER-198; SER-204 AND SER-883</scope>
    <scope>IDENTIFICATION BY MASS SPECTROMETRY [LARGE SCALE ANALYSIS]</scope>
    <source>
        <tissue>Cervix carcinoma</tissue>
        <tissue>Erythroleukemia</tissue>
    </source>
</reference>
<reference key="13">
    <citation type="journal article" date="2014" name="J. Proteomics">
        <title>An enzyme assisted RP-RPLC approach for in-depth analysis of human liver phosphoproteome.</title>
        <authorList>
            <person name="Bian Y."/>
            <person name="Song C."/>
            <person name="Cheng K."/>
            <person name="Dong M."/>
            <person name="Wang F."/>
            <person name="Huang J."/>
            <person name="Sun D."/>
            <person name="Wang L."/>
            <person name="Ye M."/>
            <person name="Zou H."/>
        </authorList>
    </citation>
    <scope>PHOSPHORYLATION [LARGE SCALE ANALYSIS] AT SER-883</scope>
    <scope>IDENTIFICATION BY MASS SPECTROMETRY [LARGE SCALE ANALYSIS]</scope>
    <source>
        <tissue>Liver</tissue>
    </source>
</reference>
<reference key="14">
    <citation type="journal article" date="2015" name="Biochem. J.">
        <title>Microtubule association of EML proteins and the EML4-ALK variant 3 oncoprotein require an N-terminal trimerization domain.</title>
        <authorList>
            <person name="Richards M.W."/>
            <person name="O'Regan L."/>
            <person name="Roth D."/>
            <person name="Montgomery J.M."/>
            <person name="Straube A."/>
            <person name="Fry A.M."/>
            <person name="Bayliss R."/>
        </authorList>
    </citation>
    <scope>INTERACTION WITH EML2</scope>
</reference>
<reference key="15">
    <citation type="journal article" date="2019" name="J. Biol. Chem.">
        <title>The microtubule-associated protein EML3 regulates mitotic spindle assembly by recruiting the Augmin complex to spindle microtubules.</title>
        <authorList>
            <person name="Luo J."/>
            <person name="Yang B."/>
            <person name="Xin G."/>
            <person name="Sun M."/>
            <person name="Zhang B."/>
            <person name="Guo X."/>
            <person name="Jiang Q."/>
            <person name="Zhang C."/>
        </authorList>
    </citation>
    <scope>FUNCTION</scope>
    <scope>SUBCELLULAR LOCATION</scope>
    <scope>INTERACTION WITH TUBG1; HAUS1; HAUS2; HAUS3; HAUS4; HAUS5; HAUS6; HAUS7 AND HAUS8</scope>
    <scope>PHOSPHORYLATION AT THR-881</scope>
    <scope>MUTAGENESIS OF THR-881; SER-883 AND SER-889</scope>
</reference>
<protein>
    <recommendedName>
        <fullName>Echinoderm microtubule-associated protein-like 3</fullName>
        <shortName>EMAP-3</shortName>
    </recommendedName>
</protein>
<evidence type="ECO:0000250" key="1">
    <source>
        <dbReference type="UniProtKB" id="Q9HC35"/>
    </source>
</evidence>
<evidence type="ECO:0000255" key="2"/>
<evidence type="ECO:0000256" key="3">
    <source>
        <dbReference type="SAM" id="MobiDB-lite"/>
    </source>
</evidence>
<evidence type="ECO:0000269" key="4">
    <source>
    </source>
</evidence>
<evidence type="ECO:0000269" key="5">
    <source>
    </source>
</evidence>
<evidence type="ECO:0000269" key="6">
    <source>
    </source>
</evidence>
<evidence type="ECO:0000303" key="7">
    <source>
    </source>
</evidence>
<evidence type="ECO:0000305" key="8"/>
<evidence type="ECO:0007744" key="9">
    <source>
    </source>
</evidence>
<evidence type="ECO:0007744" key="10">
    <source>
    </source>
</evidence>
<evidence type="ECO:0007744" key="11">
    <source>
    </source>
</evidence>
<evidence type="ECO:0007744" key="12">
    <source>
    </source>
</evidence>
<evidence type="ECO:0007744" key="13">
    <source>
    </source>
</evidence>
<evidence type="ECO:0007744" key="14">
    <source>
    </source>
</evidence>
<evidence type="ECO:0007744" key="15">
    <source>
    </source>
</evidence>
<evidence type="ECO:0007744" key="16">
    <source>
    </source>
</evidence>
<name>EMAL3_HUMAN</name>
<comment type="function">
    <text evidence="4 6">Regulates mitotic spindle assembly, microtubule (MT)-kinetochore attachment and chromosome separation via recruitment of HAUS augmin-like complex and TUBG1 to the existing MTs and promoting MT-based MT nucleation (PubMed:30723163). Required for proper alignnment of chromosomes during metaphase (PubMed:18445686).</text>
</comment>
<comment type="subunit">
    <text evidence="1 5 6">Homotrimer; self-association is mediated by the N-terminal coiled coil (By similarity). Interacts with EML2 but not with EML1 (PubMed:25740311). Interacts (phosphorylated at Thr-881) with TUBG1, HAUS1, HAUS2, HAUS3, HAUS4, HAUS5, HAUS6, HAUS7 and HAUS8.</text>
</comment>
<comment type="interaction">
    <interactant intactId="EBI-1046713">
        <id>Q32P44</id>
    </interactant>
    <interactant intactId="EBI-930964">
        <id>P54253</id>
        <label>ATXN1</label>
    </interactant>
    <organismsDiffer>false</organismsDiffer>
    <experiments>3</experiments>
</comment>
<comment type="interaction">
    <interactant intactId="EBI-1046713">
        <id>Q32P44</id>
    </interactant>
    <interactant intactId="EBI-742054">
        <id>Q96D03</id>
        <label>DDIT4L</label>
    </interactant>
    <organismsDiffer>false</organismsDiffer>
    <experiments>3</experiments>
</comment>
<comment type="subcellular location">
    <subcellularLocation>
        <location evidence="4 8">Cytoplasm</location>
        <location evidence="4 8">Cytoskeleton</location>
    </subcellularLocation>
    <subcellularLocation>
        <location evidence="4">Cytoplasm</location>
    </subcellularLocation>
    <subcellularLocation>
        <location evidence="4">Nucleus</location>
    </subcellularLocation>
    <subcellularLocation>
        <location evidence="4">Midbody</location>
    </subcellularLocation>
    <subcellularLocation>
        <location evidence="4 6">Cytoplasm</location>
        <location evidence="4 6">Cytoskeleton</location>
        <location evidence="4 6">Spindle</location>
    </subcellularLocation>
    <text evidence="4">Localizes to microtubules throughout all mitotic stages and localizes to the midbody during cytokinesis.</text>
</comment>
<comment type="alternative products">
    <event type="alternative splicing"/>
    <isoform>
        <id>Q32P44-1</id>
        <name>1</name>
        <sequence type="displayed"/>
    </isoform>
    <isoform>
        <id>Q32P44-2</id>
        <name>2</name>
        <sequence type="described" ref="VSP_024483"/>
    </isoform>
    <isoform>
        <id>Q32P44-3</id>
        <name>3</name>
        <sequence type="described" ref="VSP_039926 VSP_039927 VSP_039928"/>
    </isoform>
</comment>
<comment type="PTM">
    <text evidence="6">Phosphorylation at Thr-881 during mitosis is required for interaction with TUBG1, HAUS1, HAUS2, HAUS3, HAUS4, HAUS5, HAUS6, HAUS7 and HAUS8 and their recruitment to spindle microtubules.</text>
</comment>
<comment type="miscellaneous">
    <molecule>Isoform 3</molecule>
    <text evidence="8">May be produced at very low levels due to a premature stop codon in the mRNA, leading to nonsense-mediated mRNA decay.</text>
</comment>
<comment type="similarity">
    <text evidence="8">Belongs to the WD repeat EMAP family.</text>
</comment>
<comment type="sequence caution" evidence="8">
    <conflict type="erroneous initiation">
        <sequence resource="EMBL-CDS" id="BAC04073"/>
    </conflict>
</comment>
<comment type="sequence caution" evidence="8">
    <conflict type="erroneous translation">
        <sequence resource="EMBL-CDS" id="BAC87566"/>
    </conflict>
    <text>Wrong choice of CDS.</text>
</comment>
<gene>
    <name type="primary">EML3</name>
</gene>
<organism>
    <name type="scientific">Homo sapiens</name>
    <name type="common">Human</name>
    <dbReference type="NCBI Taxonomy" id="9606"/>
    <lineage>
        <taxon>Eukaryota</taxon>
        <taxon>Metazoa</taxon>
        <taxon>Chordata</taxon>
        <taxon>Craniata</taxon>
        <taxon>Vertebrata</taxon>
        <taxon>Euteleostomi</taxon>
        <taxon>Mammalia</taxon>
        <taxon>Eutheria</taxon>
        <taxon>Euarchontoglires</taxon>
        <taxon>Primates</taxon>
        <taxon>Haplorrhini</taxon>
        <taxon>Catarrhini</taxon>
        <taxon>Hominidae</taxon>
        <taxon>Homo</taxon>
    </lineage>
</organism>
<proteinExistence type="evidence at protein level"/>
<feature type="chain" id="PRO_0000284390" description="Echinoderm microtubule-associated protein-like 3">
    <location>
        <begin position="1"/>
        <end position="896"/>
    </location>
</feature>
<feature type="repeat" description="WD 1">
    <location>
        <begin position="234"/>
        <end position="286"/>
    </location>
</feature>
<feature type="repeat" description="WD 2">
    <location>
        <begin position="295"/>
        <end position="344"/>
    </location>
</feature>
<feature type="repeat" description="WD 3">
    <location>
        <begin position="350"/>
        <end position="392"/>
    </location>
</feature>
<feature type="repeat" description="WD 4">
    <location>
        <begin position="398"/>
        <end position="434"/>
    </location>
</feature>
<feature type="repeat" description="WD 5">
    <location>
        <begin position="448"/>
        <end position="487"/>
    </location>
</feature>
<feature type="repeat" description="WD 6">
    <location>
        <begin position="504"/>
        <end position="543"/>
    </location>
</feature>
<feature type="repeat" description="WD 7">
    <location>
        <begin position="549"/>
        <end position="584"/>
    </location>
</feature>
<feature type="repeat" description="WD 8">
    <location>
        <begin position="589"/>
        <end position="626"/>
    </location>
</feature>
<feature type="repeat" description="WD 9">
    <location>
        <begin position="629"/>
        <end position="667"/>
    </location>
</feature>
<feature type="repeat" description="WD 10">
    <location>
        <begin position="674"/>
        <end position="709"/>
    </location>
</feature>
<feature type="repeat" description="WD 11">
    <location>
        <begin position="716"/>
        <end position="755"/>
    </location>
</feature>
<feature type="repeat" description="WD 12">
    <location>
        <begin position="765"/>
        <end position="823"/>
    </location>
</feature>
<feature type="repeat" description="WD 13">
    <location>
        <begin position="830"/>
        <end position="869"/>
    </location>
</feature>
<feature type="region of interest" description="Disordered" evidence="3">
    <location>
        <begin position="50"/>
        <end position="209"/>
    </location>
</feature>
<feature type="region of interest" description="Disordered" evidence="3">
    <location>
        <begin position="876"/>
        <end position="896"/>
    </location>
</feature>
<feature type="coiled-coil region" evidence="2">
    <location>
        <begin position="16"/>
        <end position="43"/>
    </location>
</feature>
<feature type="compositionally biased region" description="Polar residues" evidence="3">
    <location>
        <begin position="77"/>
        <end position="88"/>
    </location>
</feature>
<feature type="compositionally biased region" description="Pro residues" evidence="3">
    <location>
        <begin position="134"/>
        <end position="145"/>
    </location>
</feature>
<feature type="compositionally biased region" description="Low complexity" evidence="3">
    <location>
        <begin position="154"/>
        <end position="163"/>
    </location>
</feature>
<feature type="compositionally biased region" description="Polar residues" evidence="3">
    <location>
        <begin position="174"/>
        <end position="189"/>
    </location>
</feature>
<feature type="compositionally biased region" description="Low complexity" evidence="3">
    <location>
        <begin position="877"/>
        <end position="896"/>
    </location>
</feature>
<feature type="modified residue" description="N-acetylmethionine" evidence="14">
    <location>
        <position position="1"/>
    </location>
</feature>
<feature type="modified residue" description="Phosphoserine" evidence="9 10 11 12 13 15">
    <location>
        <position position="176"/>
    </location>
</feature>
<feature type="modified residue" description="Phosphoserine" evidence="15">
    <location>
        <position position="198"/>
    </location>
</feature>
<feature type="modified residue" description="Phosphoserine" evidence="15">
    <location>
        <position position="204"/>
    </location>
</feature>
<feature type="modified residue" description="Phosphothreonine; by CDK1" evidence="6 9">
    <location>
        <position position="881"/>
    </location>
</feature>
<feature type="modified residue" description="Phosphoserine" evidence="15 16">
    <location>
        <position position="883"/>
    </location>
</feature>
<feature type="splice variant" id="VSP_039926" description="In isoform 3." evidence="7">
    <location>
        <begin position="1"/>
        <end position="29"/>
    </location>
</feature>
<feature type="splice variant" id="VSP_039927" description="In isoform 3." evidence="7">
    <original>PRRNSSSSSSPSERPRQKLSRKAISSANLLVRSGSTESRGGKDPLSSPGGPGSRRSNYNLEGISVKMFLRGR</original>
    <variation>AASAEALQEGNLLRQPVSAVREHREPWGKRPPLQPWGPWISEEQLQFGRHLSEDVPSRAPHYHVHPVWHPQP</variation>
    <location>
        <begin position="152"/>
        <end position="223"/>
    </location>
</feature>
<feature type="splice variant" id="VSP_039928" description="In isoform 3." evidence="7">
    <location>
        <begin position="224"/>
        <end position="896"/>
    </location>
</feature>
<feature type="splice variant" id="VSP_024483" description="In isoform 2." evidence="7">
    <original>GVWPDGSDGTDINSLCRSHNERVVAVADDFCKVHLFQYPCARAKAPSRMYGGHGSHVTSVRFTHDDSHLVSLGGKDASIFQWRVLGAGGAGPAPATPSRTPSLSPASSLDV</original>
    <variation>VPVRSCQGAEPHVRGPRQPRDQRPIHARRLAPRLAGRQGRQHLPVASAGRWGRGAGARHALSNPLPVPRLLPRRLIAAWRDRLARRRGPAPPCPSLAQSPTTRGRLFPGLTSRHSRSRIFLEGANGAPAHTV</variation>
    <location>
        <begin position="786"/>
        <end position="896"/>
    </location>
</feature>
<feature type="sequence variant" id="VAR_031725" description="In dbSNP:rs34098002.">
    <original>Q</original>
    <variation>K</variation>
    <location>
        <position position="620"/>
    </location>
</feature>
<feature type="mutagenesis site" description="Loss of phosphorylation and impaired interaction with TUBG1, HAUS2, HAUS3, HAUS4, HAUS5, HAUS6, HAUS7 and HAUS8." evidence="6">
    <original>T</original>
    <variation>A</variation>
    <location>
        <position position="881"/>
    </location>
</feature>
<feature type="mutagenesis site" description="No loss of phosphorylation." evidence="6">
    <original>S</original>
    <variation>A</variation>
    <location>
        <position position="883"/>
    </location>
</feature>
<feature type="mutagenesis site" description="No loss of phosphorylation." evidence="6">
    <original>S</original>
    <variation>A</variation>
    <location>
        <position position="889"/>
    </location>
</feature>
<feature type="sequence conflict" description="In Ref. 1; BAC04073." evidence="8" ref="1">
    <original>S</original>
    <variation>SS</variation>
    <location>
        <position position="65"/>
    </location>
</feature>
<feature type="sequence conflict" description="In Ref. 1; BAC04073." evidence="8" ref="1">
    <original>D</original>
    <variation>N</variation>
    <location>
        <position position="381"/>
    </location>
</feature>
<feature type="sequence variant" id="VAR_082934" description="In dbSNP:rs34709729." evidence="8">
    <original>V</original>
    <variation>M</variation>
    <location sequence="Q32P44-2">
        <position position="788"/>
    </location>
</feature>
<keyword id="KW-0007">Acetylation</keyword>
<keyword id="KW-0025">Alternative splicing</keyword>
<keyword id="KW-0131">Cell cycle</keyword>
<keyword id="KW-0132">Cell division</keyword>
<keyword id="KW-0175">Coiled coil</keyword>
<keyword id="KW-0963">Cytoplasm</keyword>
<keyword id="KW-0206">Cytoskeleton</keyword>
<keyword id="KW-0493">Microtubule</keyword>
<keyword id="KW-0498">Mitosis</keyword>
<keyword id="KW-0539">Nucleus</keyword>
<keyword id="KW-0597">Phosphoprotein</keyword>
<keyword id="KW-1267">Proteomics identification</keyword>
<keyword id="KW-1185">Reference proteome</keyword>
<keyword id="KW-0677">Repeat</keyword>
<keyword id="KW-0853">WD repeat</keyword>
<sequence>MDGAAGPGDGPAREALQSLSQRLRVQEQEMELVKAALAEALRLLRLQVPPSSLQGSGTPAPPGDSLAAPPGLPPTCTPSLVSRGTQTETEVELKSSPGPPGLSNGPPAPQGASEEPSGTQSEGGGSSSSGAGSPGPPGILRPLQPPQRADTPRRNSSSSSSPSERPRQKLSRKAISSANLLVRSGSTESRGGKDPLSSPGGPGSRRSNYNLEGISVKMFLRGRPITMYIPSGIRSLEELPSGPPPETLSLDWVYGYRGRDSRSNLFVLRSGEVVYFIACVVVLYRPGGGPGGPGGGGQRHYRGHTDCVRCLAVHPDGVRVASGQTAGVDKDGKPLQPVVHIWDSETLLKLQEIGLGAFERGVGALAFSAADQGAFLCVVDDSNEHMLSVWDCSRGMKLAEIKSTNDSVLAVGFNPRDSSCIVTSGKSHVHFWNWSGGVGVPGNGTLTRKQGVFGKYKKPKFIPCFVFLPDGDILTGDSEGNILTWGRSPSDSKTPGRGGAKETYGIVAQAHAHEGSIFALCLRRDGTVLSGGGRDRRLVQWGPGLVALQEAEIPEHFGAVRAIAEGLGSELLVGTTKNALLRGDLAQGFSPVIQGHTDELWGLCTHPSQNRFLTCGHDRQLCLWDGESHALAWSIDLKETGLCADFHPSGAVVAVGLNTGRWLVLDTETREIVSDVIDGNEQLSVVRYSPDGLYLAIGSHDNVIYIYSVSSDGAKSSRFGRCMGHSSFITHLDWSKDGNFIMSNSGDYEILYWDVAGGCKQLKNRYESRDREWATYTCVLGFHVYGVWPDGSDGTDINSLCRSHNERVVAVADDFCKVHLFQYPCARAKAPSRMYGGHGSHVTSVRFTHDDSHLVSLGGKDASIFQWRVLGAGGAGPAPATPSRTPSLSPASSLDV</sequence>
<accession>Q32P44</accession>
<accession>Q6ZQW7</accession>
<accession>Q8NA55</accession>
<dbReference type="EMBL" id="AK093146">
    <property type="protein sequence ID" value="BAC04073.1"/>
    <property type="status" value="ALT_INIT"/>
    <property type="molecule type" value="mRNA"/>
</dbReference>
<dbReference type="EMBL" id="AK128679">
    <property type="protein sequence ID" value="BAC87566.1"/>
    <property type="status" value="ALT_SEQ"/>
    <property type="molecule type" value="mRNA"/>
</dbReference>
<dbReference type="EMBL" id="BC108280">
    <property type="protein sequence ID" value="AAI08281.1"/>
    <property type="molecule type" value="mRNA"/>
</dbReference>
<dbReference type="CCDS" id="CCDS76415.1">
    <molecule id="Q32P44-2"/>
</dbReference>
<dbReference type="CCDS" id="CCDS8023.2">
    <molecule id="Q32P44-1"/>
</dbReference>
<dbReference type="RefSeq" id="NP_001287722.1">
    <property type="nucleotide sequence ID" value="NM_001300793.1"/>
</dbReference>
<dbReference type="RefSeq" id="NP_001287723.1">
    <molecule id="Q32P44-2"/>
    <property type="nucleotide sequence ID" value="NM_001300794.2"/>
</dbReference>
<dbReference type="RefSeq" id="NP_694997.2">
    <molecule id="Q32P44-1"/>
    <property type="nucleotide sequence ID" value="NM_153265.3"/>
</dbReference>
<dbReference type="SMR" id="Q32P44"/>
<dbReference type="BioGRID" id="129161">
    <property type="interactions" value="70"/>
</dbReference>
<dbReference type="FunCoup" id="Q32P44">
    <property type="interactions" value="1035"/>
</dbReference>
<dbReference type="IntAct" id="Q32P44">
    <property type="interactions" value="41"/>
</dbReference>
<dbReference type="MINT" id="Q32P44"/>
<dbReference type="STRING" id="9606.ENSP00000434513"/>
<dbReference type="GlyCosmos" id="Q32P44">
    <property type="glycosylation" value="4 sites, 1 glycan"/>
</dbReference>
<dbReference type="GlyGen" id="Q32P44">
    <property type="glycosylation" value="5 sites, 1 O-linked glycan (4 sites)"/>
</dbReference>
<dbReference type="iPTMnet" id="Q32P44"/>
<dbReference type="PhosphoSitePlus" id="Q32P44"/>
<dbReference type="BioMuta" id="EML3"/>
<dbReference type="DMDM" id="121945710"/>
<dbReference type="jPOST" id="Q32P44"/>
<dbReference type="MassIVE" id="Q32P44"/>
<dbReference type="PaxDb" id="9606-ENSP00000378254"/>
<dbReference type="PeptideAtlas" id="Q32P44"/>
<dbReference type="ProteomicsDB" id="61624">
    <molecule id="Q32P44-1"/>
</dbReference>
<dbReference type="ProteomicsDB" id="61625">
    <molecule id="Q32P44-2"/>
</dbReference>
<dbReference type="ProteomicsDB" id="61626">
    <molecule id="Q32P44-3"/>
</dbReference>
<dbReference type="Antibodypedia" id="28533">
    <property type="antibodies" value="50 antibodies from 14 providers"/>
</dbReference>
<dbReference type="DNASU" id="256364"/>
<dbReference type="Ensembl" id="ENST00000394773.7">
    <molecule id="Q32P44-1"/>
    <property type="protein sequence ID" value="ENSP00000378254.2"/>
    <property type="gene ID" value="ENSG00000149499.12"/>
</dbReference>
<dbReference type="Ensembl" id="ENST00000494448.5">
    <molecule id="Q32P44-3"/>
    <property type="protein sequence ID" value="ENSP00000431752.1"/>
    <property type="gene ID" value="ENSG00000149499.12"/>
</dbReference>
<dbReference type="Ensembl" id="ENST00000529309.5">
    <molecule id="Q32P44-2"/>
    <property type="protein sequence ID" value="ENSP00000434513.1"/>
    <property type="gene ID" value="ENSG00000149499.12"/>
</dbReference>
<dbReference type="GeneID" id="256364"/>
<dbReference type="KEGG" id="hsa:256364"/>
<dbReference type="MANE-Select" id="ENST00000394773.7">
    <property type="protein sequence ID" value="ENSP00000378254.2"/>
    <property type="RefSeq nucleotide sequence ID" value="NM_153265.3"/>
    <property type="RefSeq protein sequence ID" value="NP_694997.2"/>
</dbReference>
<dbReference type="UCSC" id="uc001ntu.2">
    <molecule id="Q32P44-1"/>
    <property type="organism name" value="human"/>
</dbReference>
<dbReference type="AGR" id="HGNC:26666"/>
<dbReference type="CTD" id="256364"/>
<dbReference type="DisGeNET" id="256364"/>
<dbReference type="GeneCards" id="EML3"/>
<dbReference type="HGNC" id="HGNC:26666">
    <property type="gene designation" value="EML3"/>
</dbReference>
<dbReference type="HPA" id="ENSG00000149499">
    <property type="expression patterns" value="Low tissue specificity"/>
</dbReference>
<dbReference type="MalaCards" id="EML3"/>
<dbReference type="MIM" id="618118">
    <property type="type" value="gene"/>
</dbReference>
<dbReference type="neXtProt" id="NX_Q32P44"/>
<dbReference type="OpenTargets" id="ENSG00000149499"/>
<dbReference type="PharmGKB" id="PA142671910"/>
<dbReference type="VEuPathDB" id="HostDB:ENSG00000149499"/>
<dbReference type="eggNOG" id="KOG2106">
    <property type="taxonomic scope" value="Eukaryota"/>
</dbReference>
<dbReference type="GeneTree" id="ENSGT00940000159589"/>
<dbReference type="HOGENOM" id="CLU_1402011_0_0_1"/>
<dbReference type="InParanoid" id="Q32P44"/>
<dbReference type="OrthoDB" id="47802at2759"/>
<dbReference type="PAN-GO" id="Q32P44">
    <property type="GO annotations" value="3 GO annotations based on evolutionary models"/>
</dbReference>
<dbReference type="PhylomeDB" id="Q32P44"/>
<dbReference type="TreeFam" id="TF317832"/>
<dbReference type="PathwayCommons" id="Q32P44"/>
<dbReference type="SignaLink" id="Q32P44"/>
<dbReference type="BioGRID-ORCS" id="256364">
    <property type="hits" value="16 hits in 1154 CRISPR screens"/>
</dbReference>
<dbReference type="ChiTaRS" id="EML3">
    <property type="organism name" value="human"/>
</dbReference>
<dbReference type="GenomeRNAi" id="256364"/>
<dbReference type="Pharos" id="Q32P44">
    <property type="development level" value="Tdark"/>
</dbReference>
<dbReference type="PRO" id="PR:Q32P44"/>
<dbReference type="Proteomes" id="UP000005640">
    <property type="component" value="Chromosome 11"/>
</dbReference>
<dbReference type="RNAct" id="Q32P44">
    <property type="molecule type" value="protein"/>
</dbReference>
<dbReference type="Bgee" id="ENSG00000149499">
    <property type="expression patterns" value="Expressed in lower esophagus mucosa and 170 other cell types or tissues"/>
</dbReference>
<dbReference type="ExpressionAtlas" id="Q32P44">
    <property type="expression patterns" value="baseline and differential"/>
</dbReference>
<dbReference type="GO" id="GO:0005737">
    <property type="term" value="C:cytoplasm"/>
    <property type="evidence" value="ECO:0000314"/>
    <property type="project" value="UniProtKB"/>
</dbReference>
<dbReference type="GO" id="GO:0015630">
    <property type="term" value="C:microtubule cytoskeleton"/>
    <property type="evidence" value="ECO:0000314"/>
    <property type="project" value="UniProtKB"/>
</dbReference>
<dbReference type="GO" id="GO:0030496">
    <property type="term" value="C:midbody"/>
    <property type="evidence" value="ECO:0000314"/>
    <property type="project" value="UniProtKB"/>
</dbReference>
<dbReference type="GO" id="GO:1990498">
    <property type="term" value="C:mitotic spindle microtubule"/>
    <property type="evidence" value="ECO:0000314"/>
    <property type="project" value="UniProtKB"/>
</dbReference>
<dbReference type="GO" id="GO:0005634">
    <property type="term" value="C:nucleus"/>
    <property type="evidence" value="ECO:0000314"/>
    <property type="project" value="UniProtKB"/>
</dbReference>
<dbReference type="GO" id="GO:0005819">
    <property type="term" value="C:spindle"/>
    <property type="evidence" value="ECO:0000314"/>
    <property type="project" value="UniProtKB"/>
</dbReference>
<dbReference type="GO" id="GO:0005876">
    <property type="term" value="C:spindle microtubule"/>
    <property type="evidence" value="ECO:0000314"/>
    <property type="project" value="UniProtKB"/>
</dbReference>
<dbReference type="GO" id="GO:0008017">
    <property type="term" value="F:microtubule binding"/>
    <property type="evidence" value="ECO:0000318"/>
    <property type="project" value="GO_Central"/>
</dbReference>
<dbReference type="GO" id="GO:0051301">
    <property type="term" value="P:cell division"/>
    <property type="evidence" value="ECO:0007669"/>
    <property type="project" value="UniProtKB-KW"/>
</dbReference>
<dbReference type="GO" id="GO:0000226">
    <property type="term" value="P:microtubule cytoskeleton organization"/>
    <property type="evidence" value="ECO:0000318"/>
    <property type="project" value="GO_Central"/>
</dbReference>
<dbReference type="GO" id="GO:0007080">
    <property type="term" value="P:mitotic metaphase chromosome alignment"/>
    <property type="evidence" value="ECO:0000315"/>
    <property type="project" value="UniProtKB"/>
</dbReference>
<dbReference type="GO" id="GO:1901673">
    <property type="term" value="P:regulation of mitotic spindle assembly"/>
    <property type="evidence" value="ECO:0000315"/>
    <property type="project" value="UniProtKB"/>
</dbReference>
<dbReference type="FunFam" id="2.130.10.10:FF:000019">
    <property type="entry name" value="echinoderm microtubule-associated protein-like 4 isoform X2"/>
    <property type="match status" value="1"/>
</dbReference>
<dbReference type="FunFam" id="2.130.10.10:FF:000005">
    <property type="entry name" value="Putative echinoderm microtubule-associated protein-like 1"/>
    <property type="match status" value="1"/>
</dbReference>
<dbReference type="Gene3D" id="2.130.10.10">
    <property type="entry name" value="YVTN repeat-like/Quinoprotein amine dehydrogenase"/>
    <property type="match status" value="2"/>
</dbReference>
<dbReference type="InterPro" id="IPR055442">
    <property type="entry name" value="Beta-prop_EML-like_2nd"/>
</dbReference>
<dbReference type="InterPro" id="IPR055439">
    <property type="entry name" value="Beta-prop_EML_1st"/>
</dbReference>
<dbReference type="InterPro" id="IPR005108">
    <property type="entry name" value="HELP"/>
</dbReference>
<dbReference type="InterPro" id="IPR011047">
    <property type="entry name" value="Quinoprotein_ADH-like_sf"/>
</dbReference>
<dbReference type="InterPro" id="IPR015943">
    <property type="entry name" value="WD40/YVTN_repeat-like_dom_sf"/>
</dbReference>
<dbReference type="InterPro" id="IPR001680">
    <property type="entry name" value="WD40_rpt"/>
</dbReference>
<dbReference type="InterPro" id="IPR050630">
    <property type="entry name" value="WD_repeat_EMAP"/>
</dbReference>
<dbReference type="PANTHER" id="PTHR13720:SF15">
    <property type="entry name" value="ECHINODERM MICROTUBULE-ASSOCIATED PROTEIN-LIKE 3"/>
    <property type="match status" value="1"/>
</dbReference>
<dbReference type="PANTHER" id="PTHR13720">
    <property type="entry name" value="WD-40 REPEAT PROTEIN"/>
    <property type="match status" value="1"/>
</dbReference>
<dbReference type="Pfam" id="PF23409">
    <property type="entry name" value="Beta-prop_EML"/>
    <property type="match status" value="1"/>
</dbReference>
<dbReference type="Pfam" id="PF23414">
    <property type="entry name" value="Beta-prop_EML_2"/>
    <property type="match status" value="1"/>
</dbReference>
<dbReference type="Pfam" id="PF03451">
    <property type="entry name" value="HELP"/>
    <property type="match status" value="1"/>
</dbReference>
<dbReference type="SMART" id="SM00320">
    <property type="entry name" value="WD40"/>
    <property type="match status" value="8"/>
</dbReference>
<dbReference type="SUPFAM" id="SSF50998">
    <property type="entry name" value="Quinoprotein alcohol dehydrogenase-like"/>
    <property type="match status" value="2"/>
</dbReference>
<dbReference type="PROSITE" id="PS50082">
    <property type="entry name" value="WD_REPEATS_2"/>
    <property type="match status" value="3"/>
</dbReference>
<dbReference type="PROSITE" id="PS50294">
    <property type="entry name" value="WD_REPEATS_REGION"/>
    <property type="match status" value="1"/>
</dbReference>